<accession>Q66624</accession>
<comment type="function">
    <text evidence="1">Catalyzes the transfer of the gamma-phospho group of ATP to thymidine to generate dTMP in the salvage pathway of pyrimidine synthesis. The dTMP serves as a substrate for DNA polymerase during viral DNA replication. Allows the virus to be reactivated and to grow in non-proliferative cells lacking a high concentration of phosphorylated nucleic acid precursors.</text>
</comment>
<comment type="catalytic activity">
    <reaction evidence="1">
        <text>thymidine + ATP = dTMP + ADP + H(+)</text>
        <dbReference type="Rhea" id="RHEA:19129"/>
        <dbReference type="ChEBI" id="CHEBI:15378"/>
        <dbReference type="ChEBI" id="CHEBI:17748"/>
        <dbReference type="ChEBI" id="CHEBI:30616"/>
        <dbReference type="ChEBI" id="CHEBI:63528"/>
        <dbReference type="ChEBI" id="CHEBI:456216"/>
        <dbReference type="EC" id="2.7.1.21"/>
    </reaction>
</comment>
<comment type="subunit">
    <text evidence="1">Homodimer.</text>
</comment>
<comment type="similarity">
    <text evidence="1">Belongs to the herpesviridae thymidine kinase family.</text>
</comment>
<name>KITH_EHV2</name>
<organism>
    <name type="scientific">Equine herpesvirus 2 (strain 86/87)</name>
    <name type="common">EHV-2</name>
    <dbReference type="NCBI Taxonomy" id="82831"/>
    <lineage>
        <taxon>Viruses</taxon>
        <taxon>Duplodnaviria</taxon>
        <taxon>Heunggongvirae</taxon>
        <taxon>Peploviricota</taxon>
        <taxon>Herviviricetes</taxon>
        <taxon>Herpesvirales</taxon>
        <taxon>Orthoherpesviridae</taxon>
        <taxon>Gammaherpesvirinae</taxon>
        <taxon>Percavirus</taxon>
        <taxon>Percavirus equidgamma2</taxon>
        <taxon>Equid gammaherpesvirus 2</taxon>
    </lineage>
</organism>
<protein>
    <recommendedName>
        <fullName evidence="1">Thymidine kinase</fullName>
        <ecNumber evidence="1">2.7.1.21</ecNumber>
    </recommendedName>
</protein>
<proteinExistence type="inferred from homology"/>
<keyword id="KW-0067">ATP-binding</keyword>
<keyword id="KW-0237">DNA synthesis</keyword>
<keyword id="KW-0244">Early protein</keyword>
<keyword id="KW-0418">Kinase</keyword>
<keyword id="KW-0547">Nucleotide-binding</keyword>
<keyword id="KW-1185">Reference proteome</keyword>
<keyword id="KW-0808">Transferase</keyword>
<reference key="1">
    <citation type="journal article" date="1995" name="J. Mol. Biol.">
        <title>The DNA sequence of equine herpesvirus 2.</title>
        <authorList>
            <person name="Telford E.A.R."/>
            <person name="Watson M.S."/>
            <person name="Aird H.C."/>
            <person name="Perry J."/>
            <person name="Davison A.J."/>
        </authorList>
    </citation>
    <scope>NUCLEOTIDE SEQUENCE [LARGE SCALE GENOMIC DNA]</scope>
</reference>
<reference key="2">
    <citation type="submission" date="2015-01" db="EMBL/GenBank/DDBJ databases">
        <authorList>
            <person name="Davison A.J."/>
        </authorList>
    </citation>
    <scope>SEQUENCE REVISION</scope>
</reference>
<sequence>MAEGGAGFSSSSTSSEEAVPWSTQQPMGWEELESLGDGGGSTSADEEFQWEAMFVKSRAGSPTAEDKSRTFTLPRGRPKNEPRPERGKGKTPKKPKKPDQGATLLVGEEPRPRLGSRTRSKSRSRDKHQLPDDIYDVPNPPMLAPVDSYGNPVEQVSSSESDFEDIANIRPILRRQQPVTVKHRREPSPEPLGHPTFVHRYDKPSYDEEVCQKKDKGGRTKSKNWLRQPGVKSKLTSMKDLSGSFKSLMHIRSDGEKHKQQQRPGGSGAPGGATPRDVFNTFLGSGTCPSFKNAFFLYLEGSMGVGKTTLIRHMREINGDNVISFVEPMFYWREVYSDCVKLIYSACKPFNLGKMSTSNKVLSAQMKFMTPMKCLQTSVRRYVKANEPLQEKTAMDNWLLFDRHPLSATLVFPYLSLKNGYLAFEHFLALAANFTAHEGDIIALLCMGEEDNLKMVKLRNRKGESGVTSAHLKDLGQAFHACYCTWLLLKYLSPEDMVSVCCCDVTLNDICIMRSMSSSKVTMAKSLFNKSMFPTLMDVIQPFRSNCTIIEICLTLFMELKKVEFIVVNASEFIGDIPGVWTSIYTQSLRTQAIKTQSIDWSGLRAFSLTYNS</sequence>
<organismHost>
    <name type="scientific">Equus caballus</name>
    <name type="common">Horse</name>
    <dbReference type="NCBI Taxonomy" id="9796"/>
</organismHost>
<evidence type="ECO:0000255" key="1">
    <source>
        <dbReference type="HAMAP-Rule" id="MF_04029"/>
    </source>
</evidence>
<evidence type="ECO:0000256" key="2">
    <source>
        <dbReference type="SAM" id="MobiDB-lite"/>
    </source>
</evidence>
<dbReference type="EC" id="2.7.1.21" evidence="1"/>
<dbReference type="EMBL" id="U20824">
    <property type="protein sequence ID" value="AAC13808.2"/>
    <property type="molecule type" value="Genomic_DNA"/>
</dbReference>
<dbReference type="PIR" id="S55615">
    <property type="entry name" value="S55615"/>
</dbReference>
<dbReference type="KEGG" id="vg:1461018"/>
<dbReference type="Proteomes" id="UP000007083">
    <property type="component" value="Segment"/>
</dbReference>
<dbReference type="GO" id="GO:0005524">
    <property type="term" value="F:ATP binding"/>
    <property type="evidence" value="ECO:0007669"/>
    <property type="project" value="UniProtKB-KW"/>
</dbReference>
<dbReference type="GO" id="GO:0004797">
    <property type="term" value="F:thymidine kinase activity"/>
    <property type="evidence" value="ECO:0007669"/>
    <property type="project" value="UniProtKB-EC"/>
</dbReference>
<dbReference type="GO" id="GO:0071897">
    <property type="term" value="P:DNA biosynthetic process"/>
    <property type="evidence" value="ECO:0007669"/>
    <property type="project" value="UniProtKB-KW"/>
</dbReference>
<dbReference type="GO" id="GO:0006230">
    <property type="term" value="P:TMP biosynthetic process"/>
    <property type="evidence" value="ECO:0007669"/>
    <property type="project" value="InterPro"/>
</dbReference>
<dbReference type="Gene3D" id="3.40.50.300">
    <property type="entry name" value="P-loop containing nucleotide triphosphate hydrolases"/>
    <property type="match status" value="1"/>
</dbReference>
<dbReference type="HAMAP" id="MF_04029">
    <property type="entry name" value="HSV_KITH"/>
    <property type="match status" value="1"/>
</dbReference>
<dbReference type="InterPro" id="IPR001889">
    <property type="entry name" value="Herpes_TK"/>
</dbReference>
<dbReference type="InterPro" id="IPR013672">
    <property type="entry name" value="Herpes_TK_C"/>
</dbReference>
<dbReference type="InterPro" id="IPR027417">
    <property type="entry name" value="P-loop_NTPase"/>
</dbReference>
<dbReference type="Pfam" id="PF00693">
    <property type="entry name" value="Herpes_TK"/>
    <property type="match status" value="1"/>
</dbReference>
<dbReference type="Pfam" id="PF08465">
    <property type="entry name" value="Herpes_TK_C"/>
    <property type="match status" value="1"/>
</dbReference>
<dbReference type="SUPFAM" id="SSF52540">
    <property type="entry name" value="P-loop containing nucleoside triphosphate hydrolases"/>
    <property type="match status" value="1"/>
</dbReference>
<feature type="chain" id="PRO_0000405986" description="Thymidine kinase">
    <location>
        <begin position="1"/>
        <end position="613"/>
    </location>
</feature>
<feature type="region of interest" description="Disordered" evidence="2">
    <location>
        <begin position="1"/>
        <end position="233"/>
    </location>
</feature>
<feature type="region of interest" description="Disordered" evidence="2">
    <location>
        <begin position="253"/>
        <end position="276"/>
    </location>
</feature>
<feature type="compositionally biased region" description="Low complexity" evidence="2">
    <location>
        <begin position="8"/>
        <end position="18"/>
    </location>
</feature>
<feature type="compositionally biased region" description="Basic and acidic residues" evidence="2">
    <location>
        <begin position="78"/>
        <end position="88"/>
    </location>
</feature>
<feature type="compositionally biased region" description="Basic residues" evidence="2">
    <location>
        <begin position="114"/>
        <end position="126"/>
    </location>
</feature>
<feature type="compositionally biased region" description="Basic and acidic residues" evidence="2">
    <location>
        <begin position="199"/>
        <end position="218"/>
    </location>
</feature>
<feature type="active site" description="Proton acceptor" evidence="1">
    <location>
        <position position="327"/>
    </location>
</feature>
<feature type="binding site" evidence="1">
    <location>
        <begin position="301"/>
        <end position="308"/>
    </location>
    <ligand>
        <name>ATP</name>
        <dbReference type="ChEBI" id="CHEBI:30616"/>
    </ligand>
</feature>
<feature type="binding site" evidence="1">
    <location>
        <position position="344"/>
    </location>
    <ligand>
        <name>substrate</name>
    </ligand>
</feature>
<feature type="binding site" evidence="1">
    <location>
        <position position="365"/>
    </location>
    <ligand>
        <name>substrate</name>
    </ligand>
</feature>
<feature type="binding site" evidence="1">
    <location>
        <position position="461"/>
    </location>
    <ligand>
        <name>substrate</name>
    </ligand>
</feature>
<gene>
    <name evidence="1" type="primary">TK</name>
    <name type="ordered locus">21</name>
</gene>